<gene>
    <name evidence="1" type="primary">apaG</name>
    <name type="ordered locus">Mnod_7451</name>
</gene>
<dbReference type="EMBL" id="CP001349">
    <property type="protein sequence ID" value="ACL62188.1"/>
    <property type="molecule type" value="Genomic_DNA"/>
</dbReference>
<dbReference type="RefSeq" id="WP_015933746.1">
    <property type="nucleotide sequence ID" value="NC_011894.1"/>
</dbReference>
<dbReference type="SMR" id="B8IN72"/>
<dbReference type="STRING" id="460265.Mnod_7451"/>
<dbReference type="KEGG" id="mno:Mnod_7451"/>
<dbReference type="eggNOG" id="COG2967">
    <property type="taxonomic scope" value="Bacteria"/>
</dbReference>
<dbReference type="HOGENOM" id="CLU_128074_1_0_5"/>
<dbReference type="OrthoDB" id="9795226at2"/>
<dbReference type="Proteomes" id="UP000008207">
    <property type="component" value="Chromosome"/>
</dbReference>
<dbReference type="GO" id="GO:0070987">
    <property type="term" value="P:error-free translesion synthesis"/>
    <property type="evidence" value="ECO:0007669"/>
    <property type="project" value="TreeGrafter"/>
</dbReference>
<dbReference type="Gene3D" id="2.60.40.1470">
    <property type="entry name" value="ApaG domain"/>
    <property type="match status" value="1"/>
</dbReference>
<dbReference type="HAMAP" id="MF_00791">
    <property type="entry name" value="ApaG"/>
    <property type="match status" value="1"/>
</dbReference>
<dbReference type="InterPro" id="IPR007474">
    <property type="entry name" value="ApaG_domain"/>
</dbReference>
<dbReference type="InterPro" id="IPR036767">
    <property type="entry name" value="ApaG_sf"/>
</dbReference>
<dbReference type="InterPro" id="IPR023065">
    <property type="entry name" value="Uncharacterised_ApaG"/>
</dbReference>
<dbReference type="NCBIfam" id="NF003967">
    <property type="entry name" value="PRK05461.1"/>
    <property type="match status" value="1"/>
</dbReference>
<dbReference type="PANTHER" id="PTHR14289">
    <property type="entry name" value="F-BOX ONLY PROTEIN 3"/>
    <property type="match status" value="1"/>
</dbReference>
<dbReference type="PANTHER" id="PTHR14289:SF16">
    <property type="entry name" value="POLYMERASE DELTA-INTERACTING PROTEIN 2"/>
    <property type="match status" value="1"/>
</dbReference>
<dbReference type="Pfam" id="PF04379">
    <property type="entry name" value="DUF525"/>
    <property type="match status" value="1"/>
</dbReference>
<dbReference type="SUPFAM" id="SSF110069">
    <property type="entry name" value="ApaG-like"/>
    <property type="match status" value="1"/>
</dbReference>
<dbReference type="PROSITE" id="PS51087">
    <property type="entry name" value="APAG"/>
    <property type="match status" value="1"/>
</dbReference>
<evidence type="ECO:0000255" key="1">
    <source>
        <dbReference type="HAMAP-Rule" id="MF_00791"/>
    </source>
</evidence>
<feature type="chain" id="PRO_1000148500" description="Protein ApaG">
    <location>
        <begin position="1"/>
        <end position="130"/>
    </location>
</feature>
<feature type="domain" description="ApaG" evidence="1">
    <location>
        <begin position="3"/>
        <end position="127"/>
    </location>
</feature>
<keyword id="KW-1185">Reference proteome</keyword>
<reference key="1">
    <citation type="submission" date="2009-01" db="EMBL/GenBank/DDBJ databases">
        <title>Complete sequence of chromosome of Methylobacterium nodulans ORS 2060.</title>
        <authorList>
            <consortium name="US DOE Joint Genome Institute"/>
            <person name="Lucas S."/>
            <person name="Copeland A."/>
            <person name="Lapidus A."/>
            <person name="Glavina del Rio T."/>
            <person name="Dalin E."/>
            <person name="Tice H."/>
            <person name="Bruce D."/>
            <person name="Goodwin L."/>
            <person name="Pitluck S."/>
            <person name="Sims D."/>
            <person name="Brettin T."/>
            <person name="Detter J.C."/>
            <person name="Han C."/>
            <person name="Larimer F."/>
            <person name="Land M."/>
            <person name="Hauser L."/>
            <person name="Kyrpides N."/>
            <person name="Ivanova N."/>
            <person name="Marx C.J."/>
            <person name="Richardson P."/>
        </authorList>
    </citation>
    <scope>NUCLEOTIDE SEQUENCE [LARGE SCALE GENOMIC DNA]</scope>
    <source>
        <strain>LMG 21967 / CNCM I-2342 / ORS 2060</strain>
    </source>
</reference>
<sequence>MYKAETRGISVIVTPRFVEEESSPDESRYFFAYTVEITNNGRDRVQLRSRHWRIIDGRGALQEVRGAGVVGKQPVLGPGESFSYTSGCPLPTPNGTMEGTYTMATADGESFEAVIPAFSLDVPHMRRVMH</sequence>
<protein>
    <recommendedName>
        <fullName evidence="1">Protein ApaG</fullName>
    </recommendedName>
</protein>
<organism>
    <name type="scientific">Methylobacterium nodulans (strain LMG 21967 / CNCM I-2342 / ORS 2060)</name>
    <dbReference type="NCBI Taxonomy" id="460265"/>
    <lineage>
        <taxon>Bacteria</taxon>
        <taxon>Pseudomonadati</taxon>
        <taxon>Pseudomonadota</taxon>
        <taxon>Alphaproteobacteria</taxon>
        <taxon>Hyphomicrobiales</taxon>
        <taxon>Methylobacteriaceae</taxon>
        <taxon>Methylobacterium</taxon>
    </lineage>
</organism>
<proteinExistence type="inferred from homology"/>
<name>APAG_METNO</name>
<accession>B8IN72</accession>